<reference key="1">
    <citation type="journal article" date="2002" name="J. Bacteriol.">
        <title>Whole-genome comparison of Mycobacterium tuberculosis clinical and laboratory strains.</title>
        <authorList>
            <person name="Fleischmann R.D."/>
            <person name="Alland D."/>
            <person name="Eisen J.A."/>
            <person name="Carpenter L."/>
            <person name="White O."/>
            <person name="Peterson J.D."/>
            <person name="DeBoy R.T."/>
            <person name="Dodson R.J."/>
            <person name="Gwinn M.L."/>
            <person name="Haft D.H."/>
            <person name="Hickey E.K."/>
            <person name="Kolonay J.F."/>
            <person name="Nelson W.C."/>
            <person name="Umayam L.A."/>
            <person name="Ermolaeva M.D."/>
            <person name="Salzberg S.L."/>
            <person name="Delcher A."/>
            <person name="Utterback T.R."/>
            <person name="Weidman J.F."/>
            <person name="Khouri H.M."/>
            <person name="Gill J."/>
            <person name="Mikula A."/>
            <person name="Bishai W."/>
            <person name="Jacobs W.R. Jr."/>
            <person name="Venter J.C."/>
            <person name="Fraser C.M."/>
        </authorList>
    </citation>
    <scope>NUCLEOTIDE SEQUENCE [LARGE SCALE GENOMIC DNA]</scope>
    <source>
        <strain>CDC 1551 / Oshkosh</strain>
    </source>
</reference>
<proteinExistence type="inferred from homology"/>
<protein>
    <recommendedName>
        <fullName evidence="1">Glutamyl-tRNA reductase</fullName>
        <shortName evidence="1">GluTR</shortName>
        <ecNumber evidence="1">1.2.1.70</ecNumber>
    </recommendedName>
</protein>
<organism>
    <name type="scientific">Mycobacterium tuberculosis (strain CDC 1551 / Oshkosh)</name>
    <dbReference type="NCBI Taxonomy" id="83331"/>
    <lineage>
        <taxon>Bacteria</taxon>
        <taxon>Bacillati</taxon>
        <taxon>Actinomycetota</taxon>
        <taxon>Actinomycetes</taxon>
        <taxon>Mycobacteriales</taxon>
        <taxon>Mycobacteriaceae</taxon>
        <taxon>Mycobacterium</taxon>
        <taxon>Mycobacterium tuberculosis complex</taxon>
    </lineage>
</organism>
<gene>
    <name evidence="1" type="primary">hemA</name>
    <name type="ordered locus">MT0530</name>
</gene>
<accession>P9WMP6</accession>
<accession>L0T3Z5</accession>
<accession>P64328</accession>
<accession>Q11139</accession>
<comment type="function">
    <text evidence="1">Catalyzes the NADPH-dependent reduction of glutamyl-tRNA(Glu) to glutamate 1-semialdehyde (GSA).</text>
</comment>
<comment type="catalytic activity">
    <reaction evidence="1">
        <text>(S)-4-amino-5-oxopentanoate + tRNA(Glu) + NADP(+) = L-glutamyl-tRNA(Glu) + NADPH + H(+)</text>
        <dbReference type="Rhea" id="RHEA:12344"/>
        <dbReference type="Rhea" id="RHEA-COMP:9663"/>
        <dbReference type="Rhea" id="RHEA-COMP:9680"/>
        <dbReference type="ChEBI" id="CHEBI:15378"/>
        <dbReference type="ChEBI" id="CHEBI:57501"/>
        <dbReference type="ChEBI" id="CHEBI:57783"/>
        <dbReference type="ChEBI" id="CHEBI:58349"/>
        <dbReference type="ChEBI" id="CHEBI:78442"/>
        <dbReference type="ChEBI" id="CHEBI:78520"/>
        <dbReference type="EC" id="1.2.1.70"/>
    </reaction>
</comment>
<comment type="pathway">
    <text evidence="1">Porphyrin-containing compound metabolism; protoporphyrin-IX biosynthesis; 5-aminolevulinate from L-glutamyl-tRNA(Glu): step 1/2.</text>
</comment>
<comment type="subunit">
    <text evidence="1">Homodimer.</text>
</comment>
<comment type="domain">
    <text evidence="1">Possesses an unusual extended V-shaped dimeric structure with each monomer consisting of three distinct domains arranged along a curved 'spinal' alpha-helix. The N-terminal catalytic domain specifically recognizes the glutamate moiety of the substrate. The second domain is the NADPH-binding domain, and the third C-terminal domain is responsible for dimerization.</text>
</comment>
<comment type="miscellaneous">
    <text evidence="1">During catalysis, the active site Cys acts as a nucleophile attacking the alpha-carbonyl group of tRNA-bound glutamate with the formation of a thioester intermediate between enzyme and glutamate, and the concomitant release of tRNA(Glu). The thioester intermediate is finally reduced by direct hydride transfer from NADPH, to form the product GSA.</text>
</comment>
<comment type="similarity">
    <text evidence="1">Belongs to the glutamyl-tRNA reductase family.</text>
</comment>
<comment type="sequence caution" evidence="3">
    <conflict type="erroneous initiation">
        <sequence resource="EMBL-CDS" id="AAK44753"/>
    </conflict>
</comment>
<sequence>MSVLLFGVSHRSAPVVVLEQLSIDESDQVKIIDRVLASPLVTEAMVLSTCNRVEVYAVVDAFHGGLSVIGQVLAEHSGMSMGELTKYAYVRYSEAAVEHLFAVASGLDSAVIGEQQVLGQVRRAYAVAESNRTVGRVLHELAQRALSVGKRVHSETAIDAAGASVVSVALGMAERKLGSLAGTTAVVIGAGAMGALSAVHLTRAGVGHIQVLNRSLSRAQRLARRIRESGVPAEALALDRLANVLADADVVVSCTGAVRPVVSLADVHHALAAARRDEATRPLVICDLGMPRDVDPAVARLPCVWVVDVDSVQHEPSAHAAAADVEAARHIVAAEVASYLVGQRMAEVTPTVTALRQRAAEVVEAELLRLDNRLPGLQSVQREEVARTVRRVVDKLLHAPTVRIKQLASAPGGDSYAEALRELFELDQTAVDAVATAGELPVVPSGFDAESRRGGGDMQSSPKRSPSN</sequence>
<keyword id="KW-0521">NADP</keyword>
<keyword id="KW-0560">Oxidoreductase</keyword>
<keyword id="KW-0627">Porphyrin biosynthesis</keyword>
<keyword id="KW-1185">Reference proteome</keyword>
<dbReference type="EC" id="1.2.1.70" evidence="1"/>
<dbReference type="EMBL" id="AE000516">
    <property type="protein sequence ID" value="AAK44753.1"/>
    <property type="status" value="ALT_INIT"/>
    <property type="molecule type" value="Genomic_DNA"/>
</dbReference>
<dbReference type="PIR" id="H70746">
    <property type="entry name" value="H70746"/>
</dbReference>
<dbReference type="RefSeq" id="WP_003402699.1">
    <property type="nucleotide sequence ID" value="NZ_KK341227.1"/>
</dbReference>
<dbReference type="SMR" id="P9WMP6"/>
<dbReference type="KEGG" id="mtc:MT0530"/>
<dbReference type="PATRIC" id="fig|83331.31.peg.562"/>
<dbReference type="HOGENOM" id="CLU_035113_4_0_11"/>
<dbReference type="UniPathway" id="UPA00251">
    <property type="reaction ID" value="UER00316"/>
</dbReference>
<dbReference type="Proteomes" id="UP000001020">
    <property type="component" value="Chromosome"/>
</dbReference>
<dbReference type="GO" id="GO:0008883">
    <property type="term" value="F:glutamyl-tRNA reductase activity"/>
    <property type="evidence" value="ECO:0007669"/>
    <property type="project" value="UniProtKB-UniRule"/>
</dbReference>
<dbReference type="GO" id="GO:0050661">
    <property type="term" value="F:NADP binding"/>
    <property type="evidence" value="ECO:0007669"/>
    <property type="project" value="InterPro"/>
</dbReference>
<dbReference type="GO" id="GO:0019353">
    <property type="term" value="P:protoporphyrinogen IX biosynthetic process from glutamate"/>
    <property type="evidence" value="ECO:0007669"/>
    <property type="project" value="TreeGrafter"/>
</dbReference>
<dbReference type="CDD" id="cd05213">
    <property type="entry name" value="NAD_bind_Glutamyl_tRNA_reduct"/>
    <property type="match status" value="1"/>
</dbReference>
<dbReference type="FunFam" id="3.30.460.30:FF:000001">
    <property type="entry name" value="Glutamyl-tRNA reductase"/>
    <property type="match status" value="1"/>
</dbReference>
<dbReference type="Gene3D" id="3.30.460.30">
    <property type="entry name" value="Glutamyl-tRNA reductase, N-terminal domain"/>
    <property type="match status" value="1"/>
</dbReference>
<dbReference type="Gene3D" id="3.40.50.720">
    <property type="entry name" value="NAD(P)-binding Rossmann-like Domain"/>
    <property type="match status" value="1"/>
</dbReference>
<dbReference type="HAMAP" id="MF_00087">
    <property type="entry name" value="Glu_tRNA_reductase"/>
    <property type="match status" value="1"/>
</dbReference>
<dbReference type="InterPro" id="IPR000343">
    <property type="entry name" value="4pyrrol_synth_GluRdtase"/>
</dbReference>
<dbReference type="InterPro" id="IPR015896">
    <property type="entry name" value="4pyrrol_synth_GluRdtase_dimer"/>
</dbReference>
<dbReference type="InterPro" id="IPR015895">
    <property type="entry name" value="4pyrrol_synth_GluRdtase_N"/>
</dbReference>
<dbReference type="InterPro" id="IPR018214">
    <property type="entry name" value="GluRdtase_CS"/>
</dbReference>
<dbReference type="InterPro" id="IPR036453">
    <property type="entry name" value="GluRdtase_dimer_dom_sf"/>
</dbReference>
<dbReference type="InterPro" id="IPR036343">
    <property type="entry name" value="GluRdtase_N_sf"/>
</dbReference>
<dbReference type="InterPro" id="IPR036291">
    <property type="entry name" value="NAD(P)-bd_dom_sf"/>
</dbReference>
<dbReference type="InterPro" id="IPR006151">
    <property type="entry name" value="Shikm_DH/Glu-tRNA_Rdtase"/>
</dbReference>
<dbReference type="NCBIfam" id="TIGR01035">
    <property type="entry name" value="hemA"/>
    <property type="match status" value="1"/>
</dbReference>
<dbReference type="NCBIfam" id="NF000744">
    <property type="entry name" value="PRK00045.1-3"/>
    <property type="match status" value="1"/>
</dbReference>
<dbReference type="PANTHER" id="PTHR43013">
    <property type="entry name" value="GLUTAMYL-TRNA REDUCTASE"/>
    <property type="match status" value="1"/>
</dbReference>
<dbReference type="PANTHER" id="PTHR43013:SF1">
    <property type="entry name" value="GLUTAMYL-TRNA REDUCTASE"/>
    <property type="match status" value="1"/>
</dbReference>
<dbReference type="Pfam" id="PF00745">
    <property type="entry name" value="GlutR_dimer"/>
    <property type="match status" value="1"/>
</dbReference>
<dbReference type="Pfam" id="PF05201">
    <property type="entry name" value="GlutR_N"/>
    <property type="match status" value="1"/>
</dbReference>
<dbReference type="Pfam" id="PF01488">
    <property type="entry name" value="Shikimate_DH"/>
    <property type="match status" value="1"/>
</dbReference>
<dbReference type="PIRSF" id="PIRSF000445">
    <property type="entry name" value="4pyrrol_synth_GluRdtase"/>
    <property type="match status" value="1"/>
</dbReference>
<dbReference type="SUPFAM" id="SSF69742">
    <property type="entry name" value="Glutamyl tRNA-reductase catalytic, N-terminal domain"/>
    <property type="match status" value="1"/>
</dbReference>
<dbReference type="SUPFAM" id="SSF69075">
    <property type="entry name" value="Glutamyl tRNA-reductase dimerization domain"/>
    <property type="match status" value="1"/>
</dbReference>
<dbReference type="SUPFAM" id="SSF51735">
    <property type="entry name" value="NAD(P)-binding Rossmann-fold domains"/>
    <property type="match status" value="1"/>
</dbReference>
<dbReference type="PROSITE" id="PS00747">
    <property type="entry name" value="GLUTR"/>
    <property type="match status" value="1"/>
</dbReference>
<evidence type="ECO:0000255" key="1">
    <source>
        <dbReference type="HAMAP-Rule" id="MF_00087"/>
    </source>
</evidence>
<evidence type="ECO:0000256" key="2">
    <source>
        <dbReference type="SAM" id="MobiDB-lite"/>
    </source>
</evidence>
<evidence type="ECO:0000305" key="3"/>
<name>HEM1_MYCTO</name>
<feature type="chain" id="PRO_0000427267" description="Glutamyl-tRNA reductase">
    <location>
        <begin position="1"/>
        <end position="468"/>
    </location>
</feature>
<feature type="region of interest" description="Disordered" evidence="2">
    <location>
        <begin position="443"/>
        <end position="468"/>
    </location>
</feature>
<feature type="compositionally biased region" description="Polar residues" evidence="2">
    <location>
        <begin position="458"/>
        <end position="468"/>
    </location>
</feature>
<feature type="active site" description="Nucleophile" evidence="1">
    <location>
        <position position="50"/>
    </location>
</feature>
<feature type="binding site" evidence="1">
    <location>
        <begin position="49"/>
        <end position="52"/>
    </location>
    <ligand>
        <name>substrate</name>
    </ligand>
</feature>
<feature type="binding site" evidence="1">
    <location>
        <position position="109"/>
    </location>
    <ligand>
        <name>substrate</name>
    </ligand>
</feature>
<feature type="binding site" evidence="1">
    <location>
        <begin position="114"/>
        <end position="116"/>
    </location>
    <ligand>
        <name>substrate</name>
    </ligand>
</feature>
<feature type="binding site" evidence="1">
    <location>
        <position position="120"/>
    </location>
    <ligand>
        <name>substrate</name>
    </ligand>
</feature>
<feature type="binding site" evidence="1">
    <location>
        <begin position="189"/>
        <end position="194"/>
    </location>
    <ligand>
        <name>NADP(+)</name>
        <dbReference type="ChEBI" id="CHEBI:58349"/>
    </ligand>
</feature>
<feature type="site" description="Important for activity" evidence="1">
    <location>
        <position position="99"/>
    </location>
</feature>